<name>Y290_LAMBD</name>
<accession>P03766</accession>
<keyword id="KW-1185">Reference proteome</keyword>
<organism>
    <name type="scientific">Escherichia phage lambda</name>
    <name type="common">Bacteriophage lambda</name>
    <dbReference type="NCBI Taxonomy" id="2681611"/>
    <lineage>
        <taxon>Viruses</taxon>
        <taxon>Duplodnaviria</taxon>
        <taxon>Heunggongvirae</taxon>
        <taxon>Uroviricota</taxon>
        <taxon>Caudoviricetes</taxon>
        <taxon>Lambdavirus</taxon>
        <taxon>Lambdavirus lambda</taxon>
    </lineage>
</organism>
<organismHost>
    <name type="scientific">Escherichia coli</name>
    <dbReference type="NCBI Taxonomy" id="562"/>
</organismHost>
<feature type="chain" id="PRO_0000077719" description="Uncharacterized nin region protein ORF290">
    <location>
        <begin position="1"/>
        <end position="290"/>
    </location>
</feature>
<dbReference type="EMBL" id="J02459">
    <property type="protein sequence ID" value="AAA96588.1"/>
    <property type="molecule type" value="Genomic_DNA"/>
</dbReference>
<dbReference type="PIR" id="A43011">
    <property type="entry name" value="QXBP5L"/>
</dbReference>
<dbReference type="RefSeq" id="NP_040635.1">
    <property type="nucleotide sequence ID" value="NC_001416.1"/>
</dbReference>
<dbReference type="GeneID" id="2703498"/>
<dbReference type="KEGG" id="vg:2703498"/>
<dbReference type="Proteomes" id="UP000001711">
    <property type="component" value="Genome"/>
</dbReference>
<dbReference type="GO" id="GO:0003824">
    <property type="term" value="F:catalytic activity"/>
    <property type="evidence" value="ECO:0007669"/>
    <property type="project" value="InterPro"/>
</dbReference>
<dbReference type="Gene3D" id="3.40.50.620">
    <property type="entry name" value="HUPs"/>
    <property type="match status" value="1"/>
</dbReference>
<dbReference type="InterPro" id="IPR002500">
    <property type="entry name" value="PAPS_reduct_dom"/>
</dbReference>
<dbReference type="InterPro" id="IPR014729">
    <property type="entry name" value="Rossmann-like_a/b/a_fold"/>
</dbReference>
<dbReference type="Pfam" id="PF01507">
    <property type="entry name" value="PAPS_reduct"/>
    <property type="match status" value="1"/>
</dbReference>
<dbReference type="SUPFAM" id="SSF52402">
    <property type="entry name" value="Adenine nucleotide alpha hydrolases-like"/>
    <property type="match status" value="1"/>
</dbReference>
<sequence>MINVVSFSGGRTSAYLLWLMEQKRRAGKDVHYVFMDTGCEHPMTYRFVREVVKFWDIPLTVLQVDINPELGQPNGYTVWEPKDIQTRMPVLKPFIDMVKKYGTPYVGGAFCTDRLKLVPFTKYCDDHFGRGNYTTWIGIRADEPKRLKPKPGIRYLAELSDFEKEDILAWWKQQPFDLQIPEHLGNCIFCIKKSTQKIGLACKDEEGLQRVFNEVITGSHVRDGHRETPKEIMYRGRMSLDGIAKMYSENDYQALYQDMVRAKRFDTGSCSESCEIFGGQLDFDFGREAA</sequence>
<proteinExistence type="predicted"/>
<protein>
    <recommendedName>
        <fullName>Uncharacterized nin region protein ORF290</fullName>
    </recommendedName>
</protein>
<reference key="1">
    <citation type="journal article" date="1982" name="J. Mol. Biol.">
        <title>Nucleotide sequence of bacteriophage lambda DNA.</title>
        <authorList>
            <person name="Sanger F."/>
            <person name="Coulson A.R."/>
            <person name="Hong G.F."/>
            <person name="Hill D.F."/>
            <person name="Petersen G.B."/>
        </authorList>
    </citation>
    <scope>NUCLEOTIDE SEQUENCE [LARGE SCALE GENOMIC DNA]</scope>
</reference>